<sequence length="218" mass="22908">MTVPRVKICGITRIEDGLAAANAGADAIGLVFYGPSPRAVTARQAAEICASLPPFVTTVALFVDASRAEIEGVLARVPVDLLQFHGNENPQFCDSFNRPWIKAVRMKDDVDLHHYAQIYRNAAGLLIDSYVAGVPGGTGETFNWGRVPKTLPLPVVLAGGLHPGNVAAAVTQVQPWAVDVSGGVEQKNVQGGRSGGIKDASAIRVFINSVKTRGVAGV</sequence>
<comment type="catalytic activity">
    <reaction evidence="1">
        <text>N-(5-phospho-beta-D-ribosyl)anthranilate = 1-(2-carboxyphenylamino)-1-deoxy-D-ribulose 5-phosphate</text>
        <dbReference type="Rhea" id="RHEA:21540"/>
        <dbReference type="ChEBI" id="CHEBI:18277"/>
        <dbReference type="ChEBI" id="CHEBI:58613"/>
        <dbReference type="EC" id="5.3.1.24"/>
    </reaction>
</comment>
<comment type="pathway">
    <text evidence="1">Amino-acid biosynthesis; L-tryptophan biosynthesis; L-tryptophan from chorismate: step 3/5.</text>
</comment>
<comment type="similarity">
    <text evidence="1">Belongs to the TrpF family.</text>
</comment>
<proteinExistence type="inferred from homology"/>
<protein>
    <recommendedName>
        <fullName evidence="1">N-(5'-phosphoribosyl)anthranilate isomerase</fullName>
        <shortName evidence="1">PRAI</shortName>
        <ecNumber evidence="1">5.3.1.24</ecNumber>
    </recommendedName>
</protein>
<evidence type="ECO:0000255" key="1">
    <source>
        <dbReference type="HAMAP-Rule" id="MF_00135"/>
    </source>
</evidence>
<dbReference type="EC" id="5.3.1.24" evidence="1"/>
<dbReference type="EMBL" id="AM286690">
    <property type="protein sequence ID" value="CAL16910.1"/>
    <property type="molecule type" value="Genomic_DNA"/>
</dbReference>
<dbReference type="RefSeq" id="WP_011588743.1">
    <property type="nucleotide sequence ID" value="NC_008260.1"/>
</dbReference>
<dbReference type="SMR" id="Q0VPI8"/>
<dbReference type="STRING" id="393595.ABO_1462"/>
<dbReference type="KEGG" id="abo:ABO_1462"/>
<dbReference type="eggNOG" id="COG0135">
    <property type="taxonomic scope" value="Bacteria"/>
</dbReference>
<dbReference type="HOGENOM" id="CLU_076364_2_0_6"/>
<dbReference type="OrthoDB" id="9796196at2"/>
<dbReference type="UniPathway" id="UPA00035">
    <property type="reaction ID" value="UER00042"/>
</dbReference>
<dbReference type="Proteomes" id="UP000008871">
    <property type="component" value="Chromosome"/>
</dbReference>
<dbReference type="GO" id="GO:0004640">
    <property type="term" value="F:phosphoribosylanthranilate isomerase activity"/>
    <property type="evidence" value="ECO:0007669"/>
    <property type="project" value="UniProtKB-UniRule"/>
</dbReference>
<dbReference type="GO" id="GO:0000162">
    <property type="term" value="P:L-tryptophan biosynthetic process"/>
    <property type="evidence" value="ECO:0007669"/>
    <property type="project" value="UniProtKB-UniRule"/>
</dbReference>
<dbReference type="CDD" id="cd00405">
    <property type="entry name" value="PRAI"/>
    <property type="match status" value="1"/>
</dbReference>
<dbReference type="FunFam" id="3.20.20.70:FF:000075">
    <property type="entry name" value="Tryptophan biosynthesis protein TRP1"/>
    <property type="match status" value="1"/>
</dbReference>
<dbReference type="Gene3D" id="3.20.20.70">
    <property type="entry name" value="Aldolase class I"/>
    <property type="match status" value="1"/>
</dbReference>
<dbReference type="HAMAP" id="MF_00135">
    <property type="entry name" value="PRAI"/>
    <property type="match status" value="1"/>
</dbReference>
<dbReference type="InterPro" id="IPR013785">
    <property type="entry name" value="Aldolase_TIM"/>
</dbReference>
<dbReference type="InterPro" id="IPR001240">
    <property type="entry name" value="PRAI_dom"/>
</dbReference>
<dbReference type="InterPro" id="IPR011060">
    <property type="entry name" value="RibuloseP-bd_barrel"/>
</dbReference>
<dbReference type="InterPro" id="IPR044643">
    <property type="entry name" value="TrpF_fam"/>
</dbReference>
<dbReference type="NCBIfam" id="NF002298">
    <property type="entry name" value="PRK01222.1-4"/>
    <property type="match status" value="1"/>
</dbReference>
<dbReference type="PANTHER" id="PTHR42894">
    <property type="entry name" value="N-(5'-PHOSPHORIBOSYL)ANTHRANILATE ISOMERASE"/>
    <property type="match status" value="1"/>
</dbReference>
<dbReference type="PANTHER" id="PTHR42894:SF1">
    <property type="entry name" value="N-(5'-PHOSPHORIBOSYL)ANTHRANILATE ISOMERASE"/>
    <property type="match status" value="1"/>
</dbReference>
<dbReference type="Pfam" id="PF00697">
    <property type="entry name" value="PRAI"/>
    <property type="match status" value="1"/>
</dbReference>
<dbReference type="SUPFAM" id="SSF51366">
    <property type="entry name" value="Ribulose-phoshate binding barrel"/>
    <property type="match status" value="1"/>
</dbReference>
<reference key="1">
    <citation type="journal article" date="2006" name="Nat. Biotechnol.">
        <title>Genome sequence of the ubiquitous hydrocarbon-degrading marine bacterium Alcanivorax borkumensis.</title>
        <authorList>
            <person name="Schneiker S."/>
            <person name="Martins dos Santos V.A.P."/>
            <person name="Bartels D."/>
            <person name="Bekel T."/>
            <person name="Brecht M."/>
            <person name="Buhrmester J."/>
            <person name="Chernikova T.N."/>
            <person name="Denaro R."/>
            <person name="Ferrer M."/>
            <person name="Gertler C."/>
            <person name="Goesmann A."/>
            <person name="Golyshina O.V."/>
            <person name="Kaminski F."/>
            <person name="Khachane A.N."/>
            <person name="Lang S."/>
            <person name="Linke B."/>
            <person name="McHardy A.C."/>
            <person name="Meyer F."/>
            <person name="Nechitaylo T."/>
            <person name="Puehler A."/>
            <person name="Regenhardt D."/>
            <person name="Rupp O."/>
            <person name="Sabirova J.S."/>
            <person name="Selbitschka W."/>
            <person name="Yakimov M.M."/>
            <person name="Timmis K.N."/>
            <person name="Vorhoelter F.-J."/>
            <person name="Weidner S."/>
            <person name="Kaiser O."/>
            <person name="Golyshin P.N."/>
        </authorList>
    </citation>
    <scope>NUCLEOTIDE SEQUENCE [LARGE SCALE GENOMIC DNA]</scope>
    <source>
        <strain>ATCC 700651 / DSM 11573 / NCIMB 13689 / SK2</strain>
    </source>
</reference>
<keyword id="KW-0028">Amino-acid biosynthesis</keyword>
<keyword id="KW-0057">Aromatic amino acid biosynthesis</keyword>
<keyword id="KW-0413">Isomerase</keyword>
<keyword id="KW-1185">Reference proteome</keyword>
<keyword id="KW-0822">Tryptophan biosynthesis</keyword>
<gene>
    <name evidence="1" type="primary">trpF</name>
    <name type="ordered locus">ABO_1462</name>
</gene>
<accession>Q0VPI8</accession>
<feature type="chain" id="PRO_1000018575" description="N-(5'-phosphoribosyl)anthranilate isomerase">
    <location>
        <begin position="1"/>
        <end position="218"/>
    </location>
</feature>
<organism>
    <name type="scientific">Alcanivorax borkumensis (strain ATCC 700651 / DSM 11573 / NCIMB 13689 / SK2)</name>
    <dbReference type="NCBI Taxonomy" id="393595"/>
    <lineage>
        <taxon>Bacteria</taxon>
        <taxon>Pseudomonadati</taxon>
        <taxon>Pseudomonadota</taxon>
        <taxon>Gammaproteobacteria</taxon>
        <taxon>Oceanospirillales</taxon>
        <taxon>Alcanivoracaceae</taxon>
        <taxon>Alcanivorax</taxon>
    </lineage>
</organism>
<name>TRPF_ALCBS</name>